<dbReference type="EC" id="2.7.7.3" evidence="1"/>
<dbReference type="EMBL" id="AM408590">
    <property type="protein sequence ID" value="CAL72975.1"/>
    <property type="molecule type" value="Genomic_DNA"/>
</dbReference>
<dbReference type="RefSeq" id="WP_003414998.1">
    <property type="nucleotide sequence ID" value="NC_008769.1"/>
</dbReference>
<dbReference type="SMR" id="A1KMV9"/>
<dbReference type="GeneID" id="45426954"/>
<dbReference type="KEGG" id="mbb:BCG_2986c"/>
<dbReference type="HOGENOM" id="CLU_100149_1_0_11"/>
<dbReference type="UniPathway" id="UPA00241">
    <property type="reaction ID" value="UER00355"/>
</dbReference>
<dbReference type="Proteomes" id="UP000001472">
    <property type="component" value="Chromosome"/>
</dbReference>
<dbReference type="GO" id="GO:0005737">
    <property type="term" value="C:cytoplasm"/>
    <property type="evidence" value="ECO:0007669"/>
    <property type="project" value="UniProtKB-SubCell"/>
</dbReference>
<dbReference type="GO" id="GO:0005524">
    <property type="term" value="F:ATP binding"/>
    <property type="evidence" value="ECO:0007669"/>
    <property type="project" value="UniProtKB-KW"/>
</dbReference>
<dbReference type="GO" id="GO:0004595">
    <property type="term" value="F:pantetheine-phosphate adenylyltransferase activity"/>
    <property type="evidence" value="ECO:0007669"/>
    <property type="project" value="UniProtKB-UniRule"/>
</dbReference>
<dbReference type="GO" id="GO:0015937">
    <property type="term" value="P:coenzyme A biosynthetic process"/>
    <property type="evidence" value="ECO:0007669"/>
    <property type="project" value="UniProtKB-UniRule"/>
</dbReference>
<dbReference type="CDD" id="cd02163">
    <property type="entry name" value="PPAT"/>
    <property type="match status" value="1"/>
</dbReference>
<dbReference type="FunFam" id="3.40.50.620:FF:000012">
    <property type="entry name" value="Phosphopantetheine adenylyltransferase"/>
    <property type="match status" value="1"/>
</dbReference>
<dbReference type="Gene3D" id="3.40.50.620">
    <property type="entry name" value="HUPs"/>
    <property type="match status" value="1"/>
</dbReference>
<dbReference type="HAMAP" id="MF_00151">
    <property type="entry name" value="PPAT_bact"/>
    <property type="match status" value="1"/>
</dbReference>
<dbReference type="InterPro" id="IPR004821">
    <property type="entry name" value="Cyt_trans-like"/>
</dbReference>
<dbReference type="InterPro" id="IPR001980">
    <property type="entry name" value="PPAT"/>
</dbReference>
<dbReference type="InterPro" id="IPR014729">
    <property type="entry name" value="Rossmann-like_a/b/a_fold"/>
</dbReference>
<dbReference type="NCBIfam" id="TIGR01510">
    <property type="entry name" value="coaD_prev_kdtB"/>
    <property type="match status" value="1"/>
</dbReference>
<dbReference type="NCBIfam" id="TIGR00125">
    <property type="entry name" value="cyt_tran_rel"/>
    <property type="match status" value="1"/>
</dbReference>
<dbReference type="PANTHER" id="PTHR21342">
    <property type="entry name" value="PHOSPHOPANTETHEINE ADENYLYLTRANSFERASE"/>
    <property type="match status" value="1"/>
</dbReference>
<dbReference type="PANTHER" id="PTHR21342:SF1">
    <property type="entry name" value="PHOSPHOPANTETHEINE ADENYLYLTRANSFERASE"/>
    <property type="match status" value="1"/>
</dbReference>
<dbReference type="Pfam" id="PF01467">
    <property type="entry name" value="CTP_transf_like"/>
    <property type="match status" value="1"/>
</dbReference>
<dbReference type="PRINTS" id="PR01020">
    <property type="entry name" value="LPSBIOSNTHSS"/>
</dbReference>
<dbReference type="SUPFAM" id="SSF52374">
    <property type="entry name" value="Nucleotidylyl transferase"/>
    <property type="match status" value="1"/>
</dbReference>
<feature type="chain" id="PRO_1000011178" description="Phosphopantetheine adenylyltransferase">
    <location>
        <begin position="1"/>
        <end position="161"/>
    </location>
</feature>
<feature type="binding site" evidence="1">
    <location>
        <begin position="9"/>
        <end position="10"/>
    </location>
    <ligand>
        <name>ATP</name>
        <dbReference type="ChEBI" id="CHEBI:30616"/>
    </ligand>
</feature>
<feature type="binding site" evidence="1">
    <location>
        <position position="9"/>
    </location>
    <ligand>
        <name>substrate</name>
    </ligand>
</feature>
<feature type="binding site" evidence="1">
    <location>
        <position position="17"/>
    </location>
    <ligand>
        <name>ATP</name>
        <dbReference type="ChEBI" id="CHEBI:30616"/>
    </ligand>
</feature>
<feature type="binding site" evidence="1">
    <location>
        <position position="41"/>
    </location>
    <ligand>
        <name>substrate</name>
    </ligand>
</feature>
<feature type="binding site" evidence="1">
    <location>
        <position position="73"/>
    </location>
    <ligand>
        <name>substrate</name>
    </ligand>
</feature>
<feature type="binding site" evidence="1">
    <location>
        <position position="87"/>
    </location>
    <ligand>
        <name>substrate</name>
    </ligand>
</feature>
<feature type="binding site" evidence="1">
    <location>
        <begin position="88"/>
        <end position="90"/>
    </location>
    <ligand>
        <name>ATP</name>
        <dbReference type="ChEBI" id="CHEBI:30616"/>
    </ligand>
</feature>
<feature type="binding site" evidence="1">
    <location>
        <position position="98"/>
    </location>
    <ligand>
        <name>ATP</name>
        <dbReference type="ChEBI" id="CHEBI:30616"/>
    </ligand>
</feature>
<feature type="binding site" evidence="1">
    <location>
        <begin position="122"/>
        <end position="128"/>
    </location>
    <ligand>
        <name>ATP</name>
        <dbReference type="ChEBI" id="CHEBI:30616"/>
    </ligand>
</feature>
<feature type="site" description="Transition state stabilizer" evidence="1">
    <location>
        <position position="17"/>
    </location>
</feature>
<protein>
    <recommendedName>
        <fullName evidence="1">Phosphopantetheine adenylyltransferase</fullName>
        <ecNumber evidence="1">2.7.7.3</ecNumber>
    </recommendedName>
    <alternativeName>
        <fullName evidence="1">Dephospho-CoA pyrophosphorylase</fullName>
    </alternativeName>
    <alternativeName>
        <fullName evidence="1">Pantetheine-phosphate adenylyltransferase</fullName>
        <shortName evidence="1">PPAT</shortName>
    </alternativeName>
</protein>
<accession>A1KMV9</accession>
<proteinExistence type="inferred from homology"/>
<keyword id="KW-0067">ATP-binding</keyword>
<keyword id="KW-0173">Coenzyme A biosynthesis</keyword>
<keyword id="KW-0963">Cytoplasm</keyword>
<keyword id="KW-0460">Magnesium</keyword>
<keyword id="KW-0547">Nucleotide-binding</keyword>
<keyword id="KW-0548">Nucleotidyltransferase</keyword>
<keyword id="KW-0808">Transferase</keyword>
<evidence type="ECO:0000255" key="1">
    <source>
        <dbReference type="HAMAP-Rule" id="MF_00151"/>
    </source>
</evidence>
<sequence length="161" mass="17628">MTGAVCPGSFDPVTLGHVDIFERAAAQFDEVVVAILVNPAKTGMFDLDERIAMVKESTTHLPNLRVQVGHGLVVDFVRSCGMTAIVKGLRTGTDFEYELQMAQMNKHIAGVDTFFVATAPRYSFVSSSLAKEVAMLGGDVSELLPEPVNRRLRDRLNTERT</sequence>
<gene>
    <name evidence="1" type="primary">coaD</name>
    <name type="ordered locus">BCG_2986c</name>
</gene>
<comment type="function">
    <text evidence="1">Reversibly transfers an adenylyl group from ATP to 4'-phosphopantetheine, yielding dephospho-CoA (dPCoA) and pyrophosphate.</text>
</comment>
<comment type="catalytic activity">
    <reaction evidence="1">
        <text>(R)-4'-phosphopantetheine + ATP + H(+) = 3'-dephospho-CoA + diphosphate</text>
        <dbReference type="Rhea" id="RHEA:19801"/>
        <dbReference type="ChEBI" id="CHEBI:15378"/>
        <dbReference type="ChEBI" id="CHEBI:30616"/>
        <dbReference type="ChEBI" id="CHEBI:33019"/>
        <dbReference type="ChEBI" id="CHEBI:57328"/>
        <dbReference type="ChEBI" id="CHEBI:61723"/>
        <dbReference type="EC" id="2.7.7.3"/>
    </reaction>
</comment>
<comment type="cofactor">
    <cofactor evidence="1">
        <name>Mg(2+)</name>
        <dbReference type="ChEBI" id="CHEBI:18420"/>
    </cofactor>
</comment>
<comment type="pathway">
    <text evidence="1">Cofactor biosynthesis; coenzyme A biosynthesis; CoA from (R)-pantothenate: step 4/5.</text>
</comment>
<comment type="subunit">
    <text evidence="1">Homohexamer.</text>
</comment>
<comment type="subcellular location">
    <subcellularLocation>
        <location evidence="1">Cytoplasm</location>
    </subcellularLocation>
</comment>
<comment type="similarity">
    <text evidence="1">Belongs to the bacterial CoaD family.</text>
</comment>
<name>COAD_MYCBP</name>
<organism>
    <name type="scientific">Mycobacterium bovis (strain BCG / Pasteur 1173P2)</name>
    <dbReference type="NCBI Taxonomy" id="410289"/>
    <lineage>
        <taxon>Bacteria</taxon>
        <taxon>Bacillati</taxon>
        <taxon>Actinomycetota</taxon>
        <taxon>Actinomycetes</taxon>
        <taxon>Mycobacteriales</taxon>
        <taxon>Mycobacteriaceae</taxon>
        <taxon>Mycobacterium</taxon>
        <taxon>Mycobacterium tuberculosis complex</taxon>
    </lineage>
</organism>
<reference key="1">
    <citation type="journal article" date="2007" name="Proc. Natl. Acad. Sci. U.S.A.">
        <title>Genome plasticity of BCG and impact on vaccine efficacy.</title>
        <authorList>
            <person name="Brosch R."/>
            <person name="Gordon S.V."/>
            <person name="Garnier T."/>
            <person name="Eiglmeier K."/>
            <person name="Frigui W."/>
            <person name="Valenti P."/>
            <person name="Dos Santos S."/>
            <person name="Duthoy S."/>
            <person name="Lacroix C."/>
            <person name="Garcia-Pelayo C."/>
            <person name="Inwald J.K."/>
            <person name="Golby P."/>
            <person name="Garcia J.N."/>
            <person name="Hewinson R.G."/>
            <person name="Behr M.A."/>
            <person name="Quail M.A."/>
            <person name="Churcher C."/>
            <person name="Barrell B.G."/>
            <person name="Parkhill J."/>
            <person name="Cole S.T."/>
        </authorList>
    </citation>
    <scope>NUCLEOTIDE SEQUENCE [LARGE SCALE GENOMIC DNA]</scope>
    <source>
        <strain>BCG / Pasteur 1173P2</strain>
    </source>
</reference>